<name>QUIP_PSEU2</name>
<comment type="function">
    <text evidence="1">Catalyzes the deacylation of acyl-homoserine lactone (AHL or acyl-HSL), releasing homoserine lactone (HSL) and the corresponding fatty acid. Possesses a specificity for the degradation of long-chain acyl-HSLs (side chains of seven or more carbons in length) (By similarity).</text>
</comment>
<comment type="catalytic activity">
    <reaction>
        <text>an N-acyl-L-homoserine lactone + H2O = L-homoserine lactone + a carboxylate</text>
        <dbReference type="Rhea" id="RHEA:18937"/>
        <dbReference type="ChEBI" id="CHEBI:15377"/>
        <dbReference type="ChEBI" id="CHEBI:29067"/>
        <dbReference type="ChEBI" id="CHEBI:55474"/>
        <dbReference type="ChEBI" id="CHEBI:58633"/>
        <dbReference type="EC" id="3.5.1.97"/>
    </reaction>
</comment>
<comment type="subunit">
    <text evidence="1">Heterodimer of an alpha subunit and a beta subunit processed from the same precursor.</text>
</comment>
<comment type="subcellular location">
    <subcellularLocation>
        <location evidence="3">Periplasm</location>
    </subcellularLocation>
</comment>
<comment type="miscellaneous">
    <text>AHL-mediated signaling mediates quorum sensing in many species of Proteobacteria, regulating hundreds of genes, including many that code for extracellular virulence factors.</text>
</comment>
<comment type="similarity">
    <text evidence="3">Belongs to the peptidase S45 family.</text>
</comment>
<sequence length="824" mass="90087">MASPALRHFLPRFGAAAAAASFLSLAGCQLGGNDPETVLPVSGTFPLKGLAQNVSVRRNNMGMPLIESSSYHDALFTLGYVHAGDRISQMLGMRLLAQGRLSEMAGADALDVDRLMRSVNLKQNASDLYNAASPRLKRFFDVYARGVNAYLFRYRDKLPADIASSGYKPEYWKPEDSALIFSLLNFSLSVNLQEELSALVLAQKVSADKLAWLLPTYPDEELPFAEADKLKGLNLNNQVTGLSDLNRIALQLSDLNMLGVAASSNWAIAPQRSRNGKSLLASDMQLPAGLNSAWSFVQIRAPKYQVSGVTIAGMPLVLSGFNGKLAWSMSNVKGDNQDLFLEKIKREGNRVSYMVDGKWLPAAAHQETFLVKGGSPLRETVYETRHGALLNASATPPGNGLSLALQVPNFKDDKSLDAFFDLSRAPNVEKAFDTSREIRAITLNMIFADASNIGWQVTGRFPNRREGQGLLPSPGWDGKYDWDGFADSMLHPYDQDPRQGWLAAANQRTIPKGYGMQLSNSWGYPERAERIAELANGGKQDLRSTIAMQYDQTTTFAAKLKSMFQAPGMSKPLKQAIDALPEADRNKAREAFTRLMAFDGKLSATSADAALYELFLQESAKQIFLDELGPETSPAWQALVANASSSYSPQADHLLGRDDSPYWDDVKTPQKEDKPAILARSLAAAITSGDSLLGSDHKAWQWGKLHRDNWASTSPLAKQLGGGEFNRGATPTGGDHTTLNVSGFEWGKGFDARMAPGLRMIVDFSLVEPMTGLISTGQSGNPASPYYANSIEPWQKGQYQSIPVQQQNYEKGYGKQRLTLTPGK</sequence>
<reference key="1">
    <citation type="journal article" date="2005" name="Proc. Natl. Acad. Sci. U.S.A.">
        <title>Comparison of the complete genome sequences of Pseudomonas syringae pv. syringae B728a and pv. tomato DC3000.</title>
        <authorList>
            <person name="Feil H."/>
            <person name="Feil W.S."/>
            <person name="Chain P."/>
            <person name="Larimer F."/>
            <person name="Dibartolo G."/>
            <person name="Copeland A."/>
            <person name="Lykidis A."/>
            <person name="Trong S."/>
            <person name="Nolan M."/>
            <person name="Goltsman E."/>
            <person name="Thiel J."/>
            <person name="Malfatti S."/>
            <person name="Loper J.E."/>
            <person name="Lapidus A."/>
            <person name="Detter J.C."/>
            <person name="Land M."/>
            <person name="Richardson P.M."/>
            <person name="Kyrpides N.C."/>
            <person name="Ivanova N."/>
            <person name="Lindow S.E."/>
        </authorList>
    </citation>
    <scope>NUCLEOTIDE SEQUENCE [LARGE SCALE GENOMIC DNA]</scope>
    <source>
        <strain>B728a</strain>
    </source>
</reference>
<feature type="signal peptide" evidence="2">
    <location>
        <begin position="1"/>
        <end position="26"/>
    </location>
</feature>
<feature type="chain" id="PRO_0000253401" description="Acyl-homoserine lactone acylase QuiP">
    <location>
        <begin position="27"/>
        <end position="824"/>
    </location>
</feature>
<feature type="chain" id="PRO_0000253402" description="Acyl-homoserine lactone acylase QuiP subunit alpha">
    <location>
        <begin position="27"/>
        <end status="unknown"/>
    </location>
</feature>
<feature type="propeptide" id="PRO_0000253403" description="Spacer peptide" evidence="1">
    <location>
        <begin status="unknown"/>
        <end position="263"/>
    </location>
</feature>
<feature type="chain" id="PRO_0000253404" description="Acyl-homoserine lactone acylase QuiP subunit beta">
    <location>
        <begin position="264"/>
        <end position="824"/>
    </location>
</feature>
<feature type="active site" description="Nucleophile" evidence="1">
    <location>
        <position position="264"/>
    </location>
</feature>
<proteinExistence type="inferred from homology"/>
<organism>
    <name type="scientific">Pseudomonas syringae pv. syringae (strain B728a)</name>
    <dbReference type="NCBI Taxonomy" id="205918"/>
    <lineage>
        <taxon>Bacteria</taxon>
        <taxon>Pseudomonadati</taxon>
        <taxon>Pseudomonadota</taxon>
        <taxon>Gammaproteobacteria</taxon>
        <taxon>Pseudomonadales</taxon>
        <taxon>Pseudomonadaceae</taxon>
        <taxon>Pseudomonas</taxon>
        <taxon>Pseudomonas syringae</taxon>
    </lineage>
</organism>
<dbReference type="EC" id="3.5.1.97"/>
<dbReference type="EMBL" id="CP000075">
    <property type="protein sequence ID" value="AAY38901.1"/>
    <property type="molecule type" value="Genomic_DNA"/>
</dbReference>
<dbReference type="RefSeq" id="WP_011268708.1">
    <property type="nucleotide sequence ID" value="NC_007005.1"/>
</dbReference>
<dbReference type="RefSeq" id="YP_236939.1">
    <property type="nucleotide sequence ID" value="NC_007005.1"/>
</dbReference>
<dbReference type="SMR" id="Q4ZPM1"/>
<dbReference type="STRING" id="205918.Psyr_3871"/>
<dbReference type="MEROPS" id="S45.003"/>
<dbReference type="KEGG" id="psb:Psyr_3871"/>
<dbReference type="PATRIC" id="fig|205918.7.peg.3979"/>
<dbReference type="eggNOG" id="COG2366">
    <property type="taxonomic scope" value="Bacteria"/>
</dbReference>
<dbReference type="HOGENOM" id="CLU_011790_0_1_6"/>
<dbReference type="OrthoDB" id="9760084at2"/>
<dbReference type="Proteomes" id="UP000000426">
    <property type="component" value="Chromosome"/>
</dbReference>
<dbReference type="GO" id="GO:0042597">
    <property type="term" value="C:periplasmic space"/>
    <property type="evidence" value="ECO:0007669"/>
    <property type="project" value="UniProtKB-SubCell"/>
</dbReference>
<dbReference type="GO" id="GO:0016811">
    <property type="term" value="F:hydrolase activity, acting on carbon-nitrogen (but not peptide) bonds, in linear amides"/>
    <property type="evidence" value="ECO:0007669"/>
    <property type="project" value="InterPro"/>
</dbReference>
<dbReference type="GO" id="GO:0017000">
    <property type="term" value="P:antibiotic biosynthetic process"/>
    <property type="evidence" value="ECO:0007669"/>
    <property type="project" value="InterPro"/>
</dbReference>
<dbReference type="GO" id="GO:0009372">
    <property type="term" value="P:quorum sensing"/>
    <property type="evidence" value="ECO:0007669"/>
    <property type="project" value="UniProtKB-KW"/>
</dbReference>
<dbReference type="CDD" id="cd03747">
    <property type="entry name" value="Ntn_PGA_like"/>
    <property type="match status" value="1"/>
</dbReference>
<dbReference type="Gene3D" id="1.10.1400.10">
    <property type="match status" value="1"/>
</dbReference>
<dbReference type="Gene3D" id="2.30.120.10">
    <property type="match status" value="1"/>
</dbReference>
<dbReference type="Gene3D" id="3.60.20.10">
    <property type="entry name" value="Glutamine Phosphoribosylpyrophosphate, subunit 1, domain 1"/>
    <property type="match status" value="1"/>
</dbReference>
<dbReference type="Gene3D" id="1.10.439.10">
    <property type="entry name" value="Penicillin Amidohydrolase, domain 1"/>
    <property type="match status" value="1"/>
</dbReference>
<dbReference type="InterPro" id="IPR029055">
    <property type="entry name" value="Ntn_hydrolases_N"/>
</dbReference>
<dbReference type="InterPro" id="IPR014395">
    <property type="entry name" value="Pen/GL7ACA/AHL_acylase"/>
</dbReference>
<dbReference type="InterPro" id="IPR043147">
    <property type="entry name" value="Penicillin_amidase_A-knob"/>
</dbReference>
<dbReference type="InterPro" id="IPR023343">
    <property type="entry name" value="Penicillin_amidase_dom1"/>
</dbReference>
<dbReference type="InterPro" id="IPR043146">
    <property type="entry name" value="Penicillin_amidase_N_B-knob"/>
</dbReference>
<dbReference type="InterPro" id="IPR002692">
    <property type="entry name" value="S45"/>
</dbReference>
<dbReference type="PANTHER" id="PTHR34218:SF4">
    <property type="entry name" value="ACYL-HOMOSERINE LACTONE ACYLASE QUIP"/>
    <property type="match status" value="1"/>
</dbReference>
<dbReference type="PANTHER" id="PTHR34218">
    <property type="entry name" value="PEPTIDASE S45 PENICILLIN AMIDASE"/>
    <property type="match status" value="1"/>
</dbReference>
<dbReference type="Pfam" id="PF01804">
    <property type="entry name" value="Penicil_amidase"/>
    <property type="match status" value="1"/>
</dbReference>
<dbReference type="PIRSF" id="PIRSF001227">
    <property type="entry name" value="Pen_acylase"/>
    <property type="match status" value="1"/>
</dbReference>
<dbReference type="SUPFAM" id="SSF56235">
    <property type="entry name" value="N-terminal nucleophile aminohydrolases (Ntn hydrolases)"/>
    <property type="match status" value="1"/>
</dbReference>
<keyword id="KW-0378">Hydrolase</keyword>
<keyword id="KW-0574">Periplasm</keyword>
<keyword id="KW-0673">Quorum sensing</keyword>
<keyword id="KW-0732">Signal</keyword>
<keyword id="KW-0865">Zymogen</keyword>
<accession>Q4ZPM1</accession>
<protein>
    <recommendedName>
        <fullName>Acyl-homoserine lactone acylase QuiP</fullName>
        <shortName>AHL acylase QuiP</shortName>
        <shortName>Acyl-HSL acylase QuiP</shortName>
        <ecNumber>3.5.1.97</ecNumber>
    </recommendedName>
    <component>
        <recommendedName>
            <fullName>Acyl-homoserine lactone acylase QuiP subunit alpha</fullName>
            <shortName>Acyl-HSL acylase QuiP subunit alpha</shortName>
        </recommendedName>
    </component>
    <component>
        <recommendedName>
            <fullName>Acyl-homoserine lactone acylase QuiP subunit beta</fullName>
            <shortName>Acyl-HSL acylase QuiP subunit beta</shortName>
        </recommendedName>
    </component>
</protein>
<evidence type="ECO:0000250" key="1"/>
<evidence type="ECO:0000255" key="2"/>
<evidence type="ECO:0000305" key="3"/>
<gene>
    <name type="primary">quiP</name>
    <name type="ordered locus">Psyr_3871</name>
</gene>